<evidence type="ECO:0000250" key="1"/>
<evidence type="ECO:0000255" key="2"/>
<evidence type="ECO:0000269" key="3">
    <source>
    </source>
</evidence>
<evidence type="ECO:0000303" key="4">
    <source>
    </source>
</evidence>
<evidence type="ECO:0000305" key="5"/>
<feature type="signal peptide" evidence="2">
    <location>
        <begin position="1"/>
        <end position="19"/>
    </location>
</feature>
<feature type="chain" id="PRO_0000012025" description="Lysozyme g-like protein 2">
    <location>
        <begin position="20"/>
        <end position="212"/>
    </location>
</feature>
<feature type="active site" evidence="1">
    <location>
        <position position="105"/>
    </location>
</feature>
<feature type="disulfide bond" evidence="1">
    <location>
        <begin position="39"/>
        <end position="92"/>
    </location>
</feature>
<feature type="disulfide bond" evidence="1">
    <location>
        <begin position="53"/>
        <end position="61"/>
    </location>
</feature>
<feature type="splice variant" id="VSP_056329" description="In isoform 2." evidence="4">
    <original>GLSAFKSGIEAIATPSDIDNDFVNDIIARAKFYKRQSF</original>
    <variation>FFLL</variation>
    <location>
        <begin position="175"/>
        <end position="212"/>
    </location>
</feature>
<feature type="sequence conflict" description="In Ref. 4; AAK16605/AAO32945." evidence="5" ref="4">
    <original>W</original>
    <variation>G</variation>
    <location>
        <position position="8"/>
    </location>
</feature>
<feature type="sequence conflict" description="In Ref. 4; AAK16605/AAO32945." evidence="5" ref="4">
    <original>G</original>
    <variation>S</variation>
    <location>
        <position position="19"/>
    </location>
</feature>
<feature type="sequence conflict" description="In Ref. 4; AAK16605/AAO32945." evidence="5" ref="4">
    <original>A</original>
    <variation>P</variation>
    <location>
        <position position="55"/>
    </location>
</feature>
<feature type="sequence conflict" description="In Ref. 4." evidence="5" ref="4">
    <original>GLSAFKSG</original>
    <variation>RLYSEYFY</variation>
    <location>
        <begin position="175"/>
        <end position="182"/>
    </location>
</feature>
<dbReference type="EC" id="3.2.1.-"/>
<dbReference type="EMBL" id="AY026238">
    <property type="protein sequence ID" value="AAK16605.1"/>
    <property type="molecule type" value="mRNA"/>
</dbReference>
<dbReference type="EMBL" id="AC079447">
    <property type="protein sequence ID" value="AAX93255.1"/>
    <property type="molecule type" value="Genomic_DNA"/>
</dbReference>
<dbReference type="EMBL" id="BC100882">
    <property type="protein sequence ID" value="AAI00883.1"/>
    <property type="molecule type" value="mRNA"/>
</dbReference>
<dbReference type="EMBL" id="BC100883">
    <property type="protein sequence ID" value="AAI00884.1"/>
    <property type="molecule type" value="mRNA"/>
</dbReference>
<dbReference type="EMBL" id="BC100884">
    <property type="protein sequence ID" value="AAI00885.1"/>
    <property type="molecule type" value="mRNA"/>
</dbReference>
<dbReference type="EMBL" id="BC100885">
    <property type="protein sequence ID" value="AAI00886.1"/>
    <property type="molecule type" value="mRNA"/>
</dbReference>
<dbReference type="EMBL" id="AF323919">
    <property type="protein sequence ID" value="AAO32945.1"/>
    <property type="molecule type" value="mRNA"/>
</dbReference>
<dbReference type="CCDS" id="CCDS2042.1">
    <molecule id="Q86SG7-1"/>
</dbReference>
<dbReference type="RefSeq" id="NP_783862.2">
    <molecule id="Q86SG7-1"/>
    <property type="nucleotide sequence ID" value="NM_175735.3"/>
</dbReference>
<dbReference type="RefSeq" id="XP_016859240.1">
    <molecule id="Q86SG7-1"/>
    <property type="nucleotide sequence ID" value="XM_017003751.3"/>
</dbReference>
<dbReference type="RefSeq" id="XP_054197248.1">
    <molecule id="Q86SG7-1"/>
    <property type="nucleotide sequence ID" value="XM_054341273.1"/>
</dbReference>
<dbReference type="SMR" id="Q86SG7"/>
<dbReference type="BioGRID" id="129047">
    <property type="interactions" value="85"/>
</dbReference>
<dbReference type="FunCoup" id="Q86SG7">
    <property type="interactions" value="278"/>
</dbReference>
<dbReference type="IntAct" id="Q86SG7">
    <property type="interactions" value="54"/>
</dbReference>
<dbReference type="STRING" id="9606.ENSP00000327533"/>
<dbReference type="CAZy" id="GH23">
    <property type="family name" value="Glycoside Hydrolase Family 23"/>
</dbReference>
<dbReference type="iPTMnet" id="Q86SG7"/>
<dbReference type="PhosphoSitePlus" id="Q86SG7"/>
<dbReference type="BioMuta" id="LYG2"/>
<dbReference type="DMDM" id="47117209"/>
<dbReference type="MassIVE" id="Q86SG7"/>
<dbReference type="PaxDb" id="9606-ENSP00000327533"/>
<dbReference type="PeptideAtlas" id="Q86SG7"/>
<dbReference type="ProteomicsDB" id="61990"/>
<dbReference type="ProteomicsDB" id="69589">
    <molecule id="Q86SG7-1"/>
</dbReference>
<dbReference type="Pumba" id="Q86SG7"/>
<dbReference type="Antibodypedia" id="32804">
    <property type="antibodies" value="61 antibodies from 14 providers"/>
</dbReference>
<dbReference type="DNASU" id="254773"/>
<dbReference type="Ensembl" id="ENST00000333017.7">
    <molecule id="Q86SG7-1"/>
    <property type="protein sequence ID" value="ENSP00000327533.2"/>
    <property type="gene ID" value="ENSG00000185674.10"/>
</dbReference>
<dbReference type="Ensembl" id="ENST00000409238.5">
    <molecule id="Q86SG7-1"/>
    <property type="protein sequence ID" value="ENSP00000386939.1"/>
    <property type="gene ID" value="ENSG00000185674.10"/>
</dbReference>
<dbReference type="Ensembl" id="ENST00000423800.5">
    <molecule id="Q86SG7-2"/>
    <property type="protein sequence ID" value="ENSP00000390357.1"/>
    <property type="gene ID" value="ENSG00000185674.10"/>
</dbReference>
<dbReference type="GeneID" id="254773"/>
<dbReference type="KEGG" id="hsa:254773"/>
<dbReference type="MANE-Select" id="ENST00000333017.7">
    <property type="protein sequence ID" value="ENSP00000327533.2"/>
    <property type="RefSeq nucleotide sequence ID" value="NM_175735.4"/>
    <property type="RefSeq protein sequence ID" value="NP_783862.2"/>
</dbReference>
<dbReference type="UCSC" id="uc002szw.2">
    <molecule id="Q86SG7-1"/>
    <property type="organism name" value="human"/>
</dbReference>
<dbReference type="AGR" id="HGNC:29615"/>
<dbReference type="CTD" id="254773"/>
<dbReference type="DisGeNET" id="254773"/>
<dbReference type="GeneCards" id="LYG2"/>
<dbReference type="HGNC" id="HGNC:29615">
    <property type="gene designation" value="LYG2"/>
</dbReference>
<dbReference type="HPA" id="ENSG00000185674">
    <property type="expression patterns" value="Group enriched (retina, skin)"/>
</dbReference>
<dbReference type="MIM" id="616547">
    <property type="type" value="gene"/>
</dbReference>
<dbReference type="neXtProt" id="NX_Q86SG7"/>
<dbReference type="OpenTargets" id="ENSG00000185674"/>
<dbReference type="PharmGKB" id="PA162394717"/>
<dbReference type="VEuPathDB" id="HostDB:ENSG00000185674"/>
<dbReference type="eggNOG" id="ENOG502RZXI">
    <property type="taxonomic scope" value="Eukaryota"/>
</dbReference>
<dbReference type="GeneTree" id="ENSGT00390000017614"/>
<dbReference type="InParanoid" id="Q86SG7"/>
<dbReference type="OMA" id="IMTMETP"/>
<dbReference type="OrthoDB" id="10021790at2759"/>
<dbReference type="PAN-GO" id="Q86SG7">
    <property type="GO annotations" value="3 GO annotations based on evolutionary models"/>
</dbReference>
<dbReference type="PhylomeDB" id="Q86SG7"/>
<dbReference type="TreeFam" id="TF329826"/>
<dbReference type="BRENDA" id="3.2.1.17">
    <property type="organism ID" value="2681"/>
</dbReference>
<dbReference type="PathwayCommons" id="Q86SG7"/>
<dbReference type="SignaLink" id="Q86SG7"/>
<dbReference type="BioGRID-ORCS" id="254773">
    <property type="hits" value="5 hits in 1144 CRISPR screens"/>
</dbReference>
<dbReference type="GenomeRNAi" id="254773"/>
<dbReference type="Pharos" id="Q86SG7">
    <property type="development level" value="Tbio"/>
</dbReference>
<dbReference type="PRO" id="PR:Q86SG7"/>
<dbReference type="Proteomes" id="UP000005640">
    <property type="component" value="Chromosome 2"/>
</dbReference>
<dbReference type="RNAct" id="Q86SG7">
    <property type="molecule type" value="protein"/>
</dbReference>
<dbReference type="Bgee" id="ENSG00000185674">
    <property type="expression patterns" value="Expressed in primordial germ cell in gonad and 109 other cell types or tissues"/>
</dbReference>
<dbReference type="ExpressionAtlas" id="Q86SG7">
    <property type="expression patterns" value="baseline and differential"/>
</dbReference>
<dbReference type="GO" id="GO:0005576">
    <property type="term" value="C:extracellular region"/>
    <property type="evidence" value="ECO:0000314"/>
    <property type="project" value="UniProtKB"/>
</dbReference>
<dbReference type="GO" id="GO:0003796">
    <property type="term" value="F:lysozyme activity"/>
    <property type="evidence" value="ECO:0000314"/>
    <property type="project" value="UniProtKB"/>
</dbReference>
<dbReference type="GO" id="GO:0042742">
    <property type="term" value="P:defense response to bacterium"/>
    <property type="evidence" value="ECO:0000314"/>
    <property type="project" value="UniProtKB"/>
</dbReference>
<dbReference type="GO" id="GO:0050830">
    <property type="term" value="P:defense response to Gram-positive bacterium"/>
    <property type="evidence" value="ECO:0000314"/>
    <property type="project" value="UniProtKB"/>
</dbReference>
<dbReference type="GO" id="GO:0009253">
    <property type="term" value="P:peptidoglycan catabolic process"/>
    <property type="evidence" value="ECO:0007669"/>
    <property type="project" value="InterPro"/>
</dbReference>
<dbReference type="CDD" id="cd01021">
    <property type="entry name" value="GEWL"/>
    <property type="match status" value="1"/>
</dbReference>
<dbReference type="FunFam" id="1.10.530.10:FF:000018">
    <property type="entry name" value="Lysozyme g-like 2"/>
    <property type="match status" value="1"/>
</dbReference>
<dbReference type="Gene3D" id="1.10.530.10">
    <property type="match status" value="1"/>
</dbReference>
<dbReference type="InterPro" id="IPR002152">
    <property type="entry name" value="Glyco_hydro_23"/>
</dbReference>
<dbReference type="InterPro" id="IPR023346">
    <property type="entry name" value="Lysozyme-like_dom_sf"/>
</dbReference>
<dbReference type="PANTHER" id="PTHR31698">
    <property type="entry name" value="LYSOZYME G FAMILY MEMBER"/>
    <property type="match status" value="1"/>
</dbReference>
<dbReference type="PANTHER" id="PTHR31698:SF4">
    <property type="entry name" value="LYSOZYME G-LIKE PROTEIN 2"/>
    <property type="match status" value="1"/>
</dbReference>
<dbReference type="PIRSF" id="PIRSF001065">
    <property type="entry name" value="Lysozyme_g"/>
    <property type="match status" value="1"/>
</dbReference>
<dbReference type="PRINTS" id="PR00749">
    <property type="entry name" value="LYSOZYMEG"/>
</dbReference>
<dbReference type="SUPFAM" id="SSF53955">
    <property type="entry name" value="Lysozyme-like"/>
    <property type="match status" value="1"/>
</dbReference>
<sequence length="212" mass="23498">MLSSVVFWGLIALIGTSRGSYPFSHSMKPHLHPRLYHGCYGDIMTMKTSGATCDANSVMNCGIRGSEMFAEMDLRAIKPYQTLIKEVGQRHCVDPAVIAAIISRESHGGSVLQDGWDHRGLKFGLMQLDKQTYHPVGAWDSKEHLSQATGILTERIKAIQKKFPTWSVAQHLKGGLSAFKSGIEAIATPSDIDNDFVNDIIARAKFYKRQSF</sequence>
<accession>Q86SG7</accession>
<accession>Q496G2</accession>
<accession>Q53RW0</accession>
<protein>
    <recommendedName>
        <fullName>Lysozyme g-like protein 2</fullName>
        <ecNumber>3.2.1.-</ecNumber>
    </recommendedName>
</protein>
<name>LYG2_HUMAN</name>
<comment type="function">
    <text evidence="3">May act as a potent antibacterial protein that may play a role in the innate immunity.</text>
</comment>
<comment type="interaction">
    <interactant intactId="EBI-18312334">
        <id>Q86SG7</id>
    </interactant>
    <interactant intactId="EBI-11139477">
        <id>Q96N21</id>
        <label>TEPSIN</label>
    </interactant>
    <organismsDiffer>false</organismsDiffer>
    <experiments>3</experiments>
</comment>
<comment type="subcellular location">
    <subcellularLocation>
        <location evidence="5">Secreted</location>
    </subcellularLocation>
</comment>
<comment type="alternative products">
    <event type="alternative splicing"/>
    <isoform>
        <id>Q86SG7-1</id>
        <name>1</name>
        <sequence type="displayed"/>
    </isoform>
    <isoform>
        <id>Q86SG7-2</id>
        <name>2</name>
        <sequence type="described" ref="VSP_056329"/>
    </isoform>
</comment>
<comment type="tissue specificity">
    <text evidence="3">Strong expression detected in the eye and weak expression in the testis. No expression is observed in any other tissues.</text>
</comment>
<comment type="similarity">
    <text evidence="5">Belongs to the glycosyl hydrolase 23 family.</text>
</comment>
<keyword id="KW-0025">Alternative splicing</keyword>
<keyword id="KW-1015">Disulfide bond</keyword>
<keyword id="KW-0326">Glycosidase</keyword>
<keyword id="KW-0378">Hydrolase</keyword>
<keyword id="KW-1267">Proteomics identification</keyword>
<keyword id="KW-1185">Reference proteome</keyword>
<keyword id="KW-0964">Secreted</keyword>
<keyword id="KW-0732">Signal</keyword>
<gene>
    <name type="primary">LYG2</name>
    <name type="synonym">LYGH</name>
</gene>
<reference key="1">
    <citation type="journal article" date="2003" name="J. Mol. Evol.">
        <title>Molecular evolution of vertebrate goose-type lysozyme genes.</title>
        <authorList>
            <person name="Irwin D.M."/>
            <person name="Gong Z."/>
        </authorList>
    </citation>
    <scope>NUCLEOTIDE SEQUENCE [MRNA] (ISOFORM 1)</scope>
</reference>
<reference key="2">
    <citation type="journal article" date="2005" name="Nature">
        <title>Generation and annotation of the DNA sequences of human chromosomes 2 and 4.</title>
        <authorList>
            <person name="Hillier L.W."/>
            <person name="Graves T.A."/>
            <person name="Fulton R.S."/>
            <person name="Fulton L.A."/>
            <person name="Pepin K.H."/>
            <person name="Minx P."/>
            <person name="Wagner-McPherson C."/>
            <person name="Layman D."/>
            <person name="Wylie K."/>
            <person name="Sekhon M."/>
            <person name="Becker M.C."/>
            <person name="Fewell G.A."/>
            <person name="Delehaunty K.D."/>
            <person name="Miner T.L."/>
            <person name="Nash W.E."/>
            <person name="Kremitzki C."/>
            <person name="Oddy L."/>
            <person name="Du H."/>
            <person name="Sun H."/>
            <person name="Bradshaw-Cordum H."/>
            <person name="Ali J."/>
            <person name="Carter J."/>
            <person name="Cordes M."/>
            <person name="Harris A."/>
            <person name="Isak A."/>
            <person name="van Brunt A."/>
            <person name="Nguyen C."/>
            <person name="Du F."/>
            <person name="Courtney L."/>
            <person name="Kalicki J."/>
            <person name="Ozersky P."/>
            <person name="Abbott S."/>
            <person name="Armstrong J."/>
            <person name="Belter E.A."/>
            <person name="Caruso L."/>
            <person name="Cedroni M."/>
            <person name="Cotton M."/>
            <person name="Davidson T."/>
            <person name="Desai A."/>
            <person name="Elliott G."/>
            <person name="Erb T."/>
            <person name="Fronick C."/>
            <person name="Gaige T."/>
            <person name="Haakenson W."/>
            <person name="Haglund K."/>
            <person name="Holmes A."/>
            <person name="Harkins R."/>
            <person name="Kim K."/>
            <person name="Kruchowski S.S."/>
            <person name="Strong C.M."/>
            <person name="Grewal N."/>
            <person name="Goyea E."/>
            <person name="Hou S."/>
            <person name="Levy A."/>
            <person name="Martinka S."/>
            <person name="Mead K."/>
            <person name="McLellan M.D."/>
            <person name="Meyer R."/>
            <person name="Randall-Maher J."/>
            <person name="Tomlinson C."/>
            <person name="Dauphin-Kohlberg S."/>
            <person name="Kozlowicz-Reilly A."/>
            <person name="Shah N."/>
            <person name="Swearengen-Shahid S."/>
            <person name="Snider J."/>
            <person name="Strong J.T."/>
            <person name="Thompson J."/>
            <person name="Yoakum M."/>
            <person name="Leonard S."/>
            <person name="Pearman C."/>
            <person name="Trani L."/>
            <person name="Radionenko M."/>
            <person name="Waligorski J.E."/>
            <person name="Wang C."/>
            <person name="Rock S.M."/>
            <person name="Tin-Wollam A.-M."/>
            <person name="Maupin R."/>
            <person name="Latreille P."/>
            <person name="Wendl M.C."/>
            <person name="Yang S.-P."/>
            <person name="Pohl C."/>
            <person name="Wallis J.W."/>
            <person name="Spieth J."/>
            <person name="Bieri T.A."/>
            <person name="Berkowicz N."/>
            <person name="Nelson J.O."/>
            <person name="Osborne J."/>
            <person name="Ding L."/>
            <person name="Meyer R."/>
            <person name="Sabo A."/>
            <person name="Shotland Y."/>
            <person name="Sinha P."/>
            <person name="Wohldmann P.E."/>
            <person name="Cook L.L."/>
            <person name="Hickenbotham M.T."/>
            <person name="Eldred J."/>
            <person name="Williams D."/>
            <person name="Jones T.A."/>
            <person name="She X."/>
            <person name="Ciccarelli F.D."/>
            <person name="Izaurralde E."/>
            <person name="Taylor J."/>
            <person name="Schmutz J."/>
            <person name="Myers R.M."/>
            <person name="Cox D.R."/>
            <person name="Huang X."/>
            <person name="McPherson J.D."/>
            <person name="Mardis E.R."/>
            <person name="Clifton S.W."/>
            <person name="Warren W.C."/>
            <person name="Chinwalla A.T."/>
            <person name="Eddy S.R."/>
            <person name="Marra M.A."/>
            <person name="Ovcharenko I."/>
            <person name="Furey T.S."/>
            <person name="Miller W."/>
            <person name="Eichler E.E."/>
            <person name="Bork P."/>
            <person name="Suyama M."/>
            <person name="Torrents D."/>
            <person name="Waterston R.H."/>
            <person name="Wilson R.K."/>
        </authorList>
    </citation>
    <scope>NUCLEOTIDE SEQUENCE [LARGE SCALE GENOMIC DNA]</scope>
</reference>
<reference key="3">
    <citation type="journal article" date="2004" name="Genome Res.">
        <title>The status, quality, and expansion of the NIH full-length cDNA project: the Mammalian Gene Collection (MGC).</title>
        <authorList>
            <consortium name="The MGC Project Team"/>
        </authorList>
    </citation>
    <scope>NUCLEOTIDE SEQUENCE [LARGE SCALE MRNA] (ISOFORMS 1 AND 2)</scope>
</reference>
<reference key="4">
    <citation type="submission" date="2001-01" db="EMBL/GenBank/DDBJ databases">
        <authorList>
            <person name="Yu L."/>
        </authorList>
    </citation>
    <scope>NUCLEOTIDE SEQUENCE [MRNA] OF 1-182 (ISOFORM 1)</scope>
</reference>
<reference key="5">
    <citation type="journal article" date="2011" name="Mol. Immunol.">
        <title>Characterization and expression of HLysG2, a basic goose-type lysozyme from the human eye and testis.</title>
        <authorList>
            <person name="Huang P."/>
            <person name="Li W.S."/>
            <person name="Xie J."/>
            <person name="Yang X.M."/>
            <person name="Jiang D.K."/>
            <person name="Jiang S."/>
            <person name="Yu L."/>
        </authorList>
    </citation>
    <scope>TISSUE SPECIFICITY</scope>
    <scope>IDENTIFICATION BY MASS SPECTROMETRY</scope>
    <scope>FUNCTION</scope>
</reference>
<organism>
    <name type="scientific">Homo sapiens</name>
    <name type="common">Human</name>
    <dbReference type="NCBI Taxonomy" id="9606"/>
    <lineage>
        <taxon>Eukaryota</taxon>
        <taxon>Metazoa</taxon>
        <taxon>Chordata</taxon>
        <taxon>Craniata</taxon>
        <taxon>Vertebrata</taxon>
        <taxon>Euteleostomi</taxon>
        <taxon>Mammalia</taxon>
        <taxon>Eutheria</taxon>
        <taxon>Euarchontoglires</taxon>
        <taxon>Primates</taxon>
        <taxon>Haplorrhini</taxon>
        <taxon>Catarrhini</taxon>
        <taxon>Hominidae</taxon>
        <taxon>Homo</taxon>
    </lineage>
</organism>
<proteinExistence type="evidence at protein level"/>